<name>Y093_CUPMC</name>
<accession>Q1LS97</accession>
<protein>
    <recommendedName>
        <fullName evidence="1">UPF0391 membrane protein Rmet_0093</fullName>
    </recommendedName>
</protein>
<keyword id="KW-1003">Cell membrane</keyword>
<keyword id="KW-0472">Membrane</keyword>
<keyword id="KW-1185">Reference proteome</keyword>
<keyword id="KW-0812">Transmembrane</keyword>
<keyword id="KW-1133">Transmembrane helix</keyword>
<proteinExistence type="inferred from homology"/>
<feature type="chain" id="PRO_0000256767" description="UPF0391 membrane protein Rmet_0093">
    <location>
        <begin position="1"/>
        <end position="54"/>
    </location>
</feature>
<feature type="transmembrane region" description="Helical" evidence="1">
    <location>
        <begin position="5"/>
        <end position="25"/>
    </location>
</feature>
<feature type="transmembrane region" description="Helical" evidence="1">
    <location>
        <begin position="30"/>
        <end position="50"/>
    </location>
</feature>
<gene>
    <name type="ordered locus">Rmet_0093</name>
</gene>
<evidence type="ECO:0000255" key="1">
    <source>
        <dbReference type="HAMAP-Rule" id="MF_01361"/>
    </source>
</evidence>
<evidence type="ECO:0000305" key="2"/>
<dbReference type="EMBL" id="CP000352">
    <property type="protein sequence ID" value="ABF06979.1"/>
    <property type="status" value="ALT_INIT"/>
    <property type="molecule type" value="Genomic_DNA"/>
</dbReference>
<dbReference type="STRING" id="266264.Rmet_0093"/>
<dbReference type="KEGG" id="rme:Rmet_0093"/>
<dbReference type="eggNOG" id="COG5487">
    <property type="taxonomic scope" value="Bacteria"/>
</dbReference>
<dbReference type="HOGENOM" id="CLU_2344601_0_0_4"/>
<dbReference type="Proteomes" id="UP000002429">
    <property type="component" value="Chromosome"/>
</dbReference>
<dbReference type="GO" id="GO:0005886">
    <property type="term" value="C:plasma membrane"/>
    <property type="evidence" value="ECO:0007669"/>
    <property type="project" value="UniProtKB-SubCell"/>
</dbReference>
<dbReference type="HAMAP" id="MF_01361">
    <property type="entry name" value="UPF0391"/>
    <property type="match status" value="1"/>
</dbReference>
<dbReference type="InterPro" id="IPR009760">
    <property type="entry name" value="DUF1328"/>
</dbReference>
<dbReference type="NCBIfam" id="NF010226">
    <property type="entry name" value="PRK13682.1-1"/>
    <property type="match status" value="1"/>
</dbReference>
<dbReference type="NCBIfam" id="NF010229">
    <property type="entry name" value="PRK13682.1-4"/>
    <property type="match status" value="1"/>
</dbReference>
<dbReference type="Pfam" id="PF07043">
    <property type="entry name" value="DUF1328"/>
    <property type="match status" value="1"/>
</dbReference>
<dbReference type="PIRSF" id="PIRSF036466">
    <property type="entry name" value="UCP036466"/>
    <property type="match status" value="1"/>
</dbReference>
<organism>
    <name type="scientific">Cupriavidus metallidurans (strain ATCC 43123 / DSM 2839 / NBRC 102507 / CH34)</name>
    <name type="common">Ralstonia metallidurans</name>
    <dbReference type="NCBI Taxonomy" id="266264"/>
    <lineage>
        <taxon>Bacteria</taxon>
        <taxon>Pseudomonadati</taxon>
        <taxon>Pseudomonadota</taxon>
        <taxon>Betaproteobacteria</taxon>
        <taxon>Burkholderiales</taxon>
        <taxon>Burkholderiaceae</taxon>
        <taxon>Cupriavidus</taxon>
    </lineage>
</organism>
<reference key="1">
    <citation type="journal article" date="2010" name="PLoS ONE">
        <title>The complete genome sequence of Cupriavidus metallidurans strain CH34, a master survivalist in harsh and anthropogenic environments.</title>
        <authorList>
            <person name="Janssen P.J."/>
            <person name="Van Houdt R."/>
            <person name="Moors H."/>
            <person name="Monsieurs P."/>
            <person name="Morin N."/>
            <person name="Michaux A."/>
            <person name="Benotmane M.A."/>
            <person name="Leys N."/>
            <person name="Vallaeys T."/>
            <person name="Lapidus A."/>
            <person name="Monchy S."/>
            <person name="Medigue C."/>
            <person name="Taghavi S."/>
            <person name="McCorkle S."/>
            <person name="Dunn J."/>
            <person name="van der Lelie D."/>
            <person name="Mergeay M."/>
        </authorList>
    </citation>
    <scope>NUCLEOTIDE SEQUENCE [LARGE SCALE GENOMIC DNA]</scope>
    <source>
        <strain>ATCC 43123 / DSM 2839 / NBRC 102507 / CH34</strain>
    </source>
</reference>
<comment type="subcellular location">
    <subcellularLocation>
        <location evidence="1">Cell membrane</location>
        <topology evidence="1">Multi-pass membrane protein</topology>
    </subcellularLocation>
</comment>
<comment type="similarity">
    <text evidence="1">Belongs to the UPF0391 family.</text>
</comment>
<comment type="sequence caution" evidence="2">
    <conflict type="erroneous initiation">
        <sequence resource="EMBL-CDS" id="ABF06979"/>
    </conflict>
</comment>
<sequence length="54" mass="5879">MLYYALVFFIVALIAAIFGFGGIAAGAVEIAKILFLIFLVVAIVTFVMGLVRRR</sequence>